<organism>
    <name type="scientific">Escherichia coli (strain K12)</name>
    <dbReference type="NCBI Taxonomy" id="83333"/>
    <lineage>
        <taxon>Bacteria</taxon>
        <taxon>Pseudomonadati</taxon>
        <taxon>Pseudomonadota</taxon>
        <taxon>Gammaproteobacteria</taxon>
        <taxon>Enterobacterales</taxon>
        <taxon>Enterobacteriaceae</taxon>
        <taxon>Escherichia</taxon>
    </lineage>
</organism>
<evidence type="ECO:0000255" key="1"/>
<evidence type="ECO:0000269" key="2">
    <source>
    </source>
</evidence>
<evidence type="ECO:0000305" key="3"/>
<evidence type="ECO:0007829" key="4">
    <source>
        <dbReference type="PDB" id="3BM1"/>
    </source>
</evidence>
<dbReference type="EC" id="1.-.-.-"/>
<dbReference type="EMBL" id="M68961">
    <property type="protein sequence ID" value="AAA24245.1"/>
    <property type="molecule type" value="Genomic_DNA"/>
</dbReference>
<dbReference type="EMBL" id="U00096">
    <property type="protein sequence ID" value="AAC74835.1"/>
    <property type="molecule type" value="Genomic_DNA"/>
</dbReference>
<dbReference type="EMBL" id="AP009048">
    <property type="protein sequence ID" value="BAA15556.1"/>
    <property type="molecule type" value="Genomic_DNA"/>
</dbReference>
<dbReference type="PIR" id="A40360">
    <property type="entry name" value="A40360"/>
</dbReference>
<dbReference type="RefSeq" id="NP_416279.1">
    <property type="nucleotide sequence ID" value="NC_000913.3"/>
</dbReference>
<dbReference type="RefSeq" id="WP_000339283.1">
    <property type="nucleotide sequence ID" value="NZ_SSZK01000001.1"/>
</dbReference>
<dbReference type="PDB" id="3BM1">
    <property type="method" value="X-ray"/>
    <property type="resolution" value="2.00 A"/>
    <property type="chains" value="A/B=1-183"/>
</dbReference>
<dbReference type="PDB" id="3BM2">
    <property type="method" value="X-ray"/>
    <property type="resolution" value="2.10 A"/>
    <property type="chains" value="A/B=1-183"/>
</dbReference>
<dbReference type="PDBsum" id="3BM1"/>
<dbReference type="PDBsum" id="3BM2"/>
<dbReference type="SMR" id="P0ACY1"/>
<dbReference type="BioGRID" id="4259139">
    <property type="interactions" value="171"/>
</dbReference>
<dbReference type="DIP" id="DIP-31841N"/>
<dbReference type="FunCoup" id="P0ACY1">
    <property type="interactions" value="186"/>
</dbReference>
<dbReference type="IntAct" id="P0ACY1">
    <property type="interactions" value="11"/>
</dbReference>
<dbReference type="STRING" id="511145.b1765"/>
<dbReference type="jPOST" id="P0ACY1"/>
<dbReference type="PaxDb" id="511145-b1765"/>
<dbReference type="EnsemblBacteria" id="AAC74835">
    <property type="protein sequence ID" value="AAC74835"/>
    <property type="gene ID" value="b1765"/>
</dbReference>
<dbReference type="GeneID" id="945964"/>
<dbReference type="KEGG" id="ecj:JW1754"/>
<dbReference type="KEGG" id="eco:b1765"/>
<dbReference type="KEGG" id="ecoc:C3026_10075"/>
<dbReference type="PATRIC" id="fig|1411691.4.peg.489"/>
<dbReference type="EchoBASE" id="EB1124"/>
<dbReference type="eggNOG" id="COG0778">
    <property type="taxonomic scope" value="Bacteria"/>
</dbReference>
<dbReference type="HOGENOM" id="CLU_070764_5_0_6"/>
<dbReference type="InParanoid" id="P0ACY1"/>
<dbReference type="OMA" id="LTEWFAY"/>
<dbReference type="OrthoDB" id="9804207at2"/>
<dbReference type="PhylomeDB" id="P0ACY1"/>
<dbReference type="BioCyc" id="EcoCyc:EG11134-MONOMER"/>
<dbReference type="EvolutionaryTrace" id="P0ACY1"/>
<dbReference type="PRO" id="PR:P0ACY1"/>
<dbReference type="Proteomes" id="UP000000625">
    <property type="component" value="Chromosome"/>
</dbReference>
<dbReference type="GO" id="GO:0005829">
    <property type="term" value="C:cytosol"/>
    <property type="evidence" value="ECO:0000314"/>
    <property type="project" value="EcoCyc"/>
</dbReference>
<dbReference type="GO" id="GO:0010181">
    <property type="term" value="F:FMN binding"/>
    <property type="evidence" value="ECO:0000314"/>
    <property type="project" value="EcoCyc"/>
</dbReference>
<dbReference type="GO" id="GO:0016491">
    <property type="term" value="F:oxidoreductase activity"/>
    <property type="evidence" value="ECO:0007669"/>
    <property type="project" value="UniProtKB-KW"/>
</dbReference>
<dbReference type="GO" id="GO:0042803">
    <property type="term" value="F:protein homodimerization activity"/>
    <property type="evidence" value="ECO:0000314"/>
    <property type="project" value="EcoCyc"/>
</dbReference>
<dbReference type="CDD" id="cd02135">
    <property type="entry name" value="YdjA-like"/>
    <property type="match status" value="1"/>
</dbReference>
<dbReference type="FunFam" id="3.40.109.10:FF:000005">
    <property type="entry name" value="NAD(P)H nitroreductase"/>
    <property type="match status" value="1"/>
</dbReference>
<dbReference type="Gene3D" id="3.40.109.10">
    <property type="entry name" value="NADH Oxidase"/>
    <property type="match status" value="1"/>
</dbReference>
<dbReference type="InterPro" id="IPR052530">
    <property type="entry name" value="NAD(P)H_nitroreductase"/>
</dbReference>
<dbReference type="InterPro" id="IPR029479">
    <property type="entry name" value="Nitroreductase"/>
</dbReference>
<dbReference type="InterPro" id="IPR000415">
    <property type="entry name" value="Nitroreductase-like"/>
</dbReference>
<dbReference type="InterPro" id="IPR026021">
    <property type="entry name" value="YdjA-like"/>
</dbReference>
<dbReference type="NCBIfam" id="NF008088">
    <property type="entry name" value="PRK10828.1"/>
    <property type="match status" value="1"/>
</dbReference>
<dbReference type="PANTHER" id="PTHR43821">
    <property type="entry name" value="NAD(P)H NITROREDUCTASE YDJA-RELATED"/>
    <property type="match status" value="1"/>
</dbReference>
<dbReference type="PANTHER" id="PTHR43821:SF1">
    <property type="entry name" value="NAD(P)H NITROREDUCTASE YDJA-RELATED"/>
    <property type="match status" value="1"/>
</dbReference>
<dbReference type="Pfam" id="PF00881">
    <property type="entry name" value="Nitroreductase"/>
    <property type="match status" value="1"/>
</dbReference>
<dbReference type="PIRSF" id="PIRSF000232">
    <property type="entry name" value="YdjA"/>
    <property type="match status" value="1"/>
</dbReference>
<dbReference type="SUPFAM" id="SSF55469">
    <property type="entry name" value="FMN-dependent nitroreductase-like"/>
    <property type="match status" value="1"/>
</dbReference>
<keyword id="KW-0002">3D-structure</keyword>
<keyword id="KW-0285">Flavoprotein</keyword>
<keyword id="KW-0288">FMN</keyword>
<keyword id="KW-0520">NAD</keyword>
<keyword id="KW-0521">NADP</keyword>
<keyword id="KW-0560">Oxidoreductase</keyword>
<keyword id="KW-1185">Reference proteome</keyword>
<proteinExistence type="evidence at protein level"/>
<gene>
    <name type="primary">ydjA</name>
    <name type="ordered locus">b1765</name>
    <name type="ordered locus">JW1754</name>
</gene>
<name>YDJA_ECOLI</name>
<comment type="cofactor">
    <cofactor evidence="2">
        <name>FMN</name>
        <dbReference type="ChEBI" id="CHEBI:58210"/>
    </cofactor>
    <text evidence="2">Binds 1 FMN per subunit.</text>
</comment>
<comment type="subunit">
    <text evidence="2">Homodimer.</text>
</comment>
<comment type="similarity">
    <text evidence="3">Belongs to the nitroreductase family.</text>
</comment>
<reference key="1">
    <citation type="journal article" date="1991" name="J. Bacteriol.">
        <title>Expression and operon structure of the sel genes of Escherichia coli and identification of a third selenium-containing formate dehydrogenase isoenzyme.</title>
        <authorList>
            <person name="Sawers G."/>
            <person name="Heider J."/>
            <person name="Zehelein E."/>
            <person name="Boeck A."/>
        </authorList>
    </citation>
    <scope>NUCLEOTIDE SEQUENCE [GENOMIC DNA]</scope>
</reference>
<reference key="2">
    <citation type="journal article" date="1996" name="DNA Res.">
        <title>A 570-kb DNA sequence of the Escherichia coli K-12 genome corresponding to the 28.0-40.1 min region on the linkage map.</title>
        <authorList>
            <person name="Aiba H."/>
            <person name="Baba T."/>
            <person name="Fujita K."/>
            <person name="Hayashi K."/>
            <person name="Inada T."/>
            <person name="Isono K."/>
            <person name="Itoh T."/>
            <person name="Kasai H."/>
            <person name="Kashimoto K."/>
            <person name="Kimura S."/>
            <person name="Kitakawa M."/>
            <person name="Kitagawa M."/>
            <person name="Makino K."/>
            <person name="Miki T."/>
            <person name="Mizobuchi K."/>
            <person name="Mori H."/>
            <person name="Mori T."/>
            <person name="Motomura K."/>
            <person name="Nakade S."/>
            <person name="Nakamura Y."/>
            <person name="Nashimoto H."/>
            <person name="Nishio Y."/>
            <person name="Oshima T."/>
            <person name="Saito N."/>
            <person name="Sampei G."/>
            <person name="Seki Y."/>
            <person name="Sivasundaram S."/>
            <person name="Tagami H."/>
            <person name="Takeda J."/>
            <person name="Takemoto K."/>
            <person name="Takeuchi Y."/>
            <person name="Wada C."/>
            <person name="Yamamoto Y."/>
            <person name="Horiuchi T."/>
        </authorList>
    </citation>
    <scope>NUCLEOTIDE SEQUENCE [LARGE SCALE GENOMIC DNA]</scope>
    <source>
        <strain>K12 / W3110 / ATCC 27325 / DSM 5911</strain>
    </source>
</reference>
<reference key="3">
    <citation type="journal article" date="1997" name="Science">
        <title>The complete genome sequence of Escherichia coli K-12.</title>
        <authorList>
            <person name="Blattner F.R."/>
            <person name="Plunkett G. III"/>
            <person name="Bloch C.A."/>
            <person name="Perna N.T."/>
            <person name="Burland V."/>
            <person name="Riley M."/>
            <person name="Collado-Vides J."/>
            <person name="Glasner J.D."/>
            <person name="Rode C.K."/>
            <person name="Mayhew G.F."/>
            <person name="Gregor J."/>
            <person name="Davis N.W."/>
            <person name="Kirkpatrick H.A."/>
            <person name="Goeden M.A."/>
            <person name="Rose D.J."/>
            <person name="Mau B."/>
            <person name="Shao Y."/>
        </authorList>
    </citation>
    <scope>NUCLEOTIDE SEQUENCE [LARGE SCALE GENOMIC DNA]</scope>
    <source>
        <strain>K12 / MG1655 / ATCC 47076</strain>
    </source>
</reference>
<reference key="4">
    <citation type="journal article" date="2006" name="Mol. Syst. Biol.">
        <title>Highly accurate genome sequences of Escherichia coli K-12 strains MG1655 and W3110.</title>
        <authorList>
            <person name="Hayashi K."/>
            <person name="Morooka N."/>
            <person name="Yamamoto Y."/>
            <person name="Fujita K."/>
            <person name="Isono K."/>
            <person name="Choi S."/>
            <person name="Ohtsubo E."/>
            <person name="Baba T."/>
            <person name="Wanner B.L."/>
            <person name="Mori H."/>
            <person name="Horiuchi T."/>
        </authorList>
    </citation>
    <scope>NUCLEOTIDE SEQUENCE [LARGE SCALE GENOMIC DNA]</scope>
    <source>
        <strain>K12 / W3110 / ATCC 27325 / DSM 5911</strain>
    </source>
</reference>
<reference key="5">
    <citation type="journal article" date="1999" name="Electrophoresis">
        <title>Enrichment of low abundance proteins of Escherichia coli by hydroxyapatite chromatography.</title>
        <authorList>
            <person name="Fountoulakis M."/>
            <person name="Takacs M.-F."/>
            <person name="Berndt P."/>
            <person name="Langen H."/>
            <person name="Takacs B."/>
        </authorList>
    </citation>
    <scope>IDENTIFICATION BY MASS SPECTROMETRY</scope>
    <source>
        <strain>B / BL21</strain>
    </source>
</reference>
<reference key="6">
    <citation type="journal article" date="2008" name="J. Mol. Biol.">
        <title>Crystal structure of a minimal nitroreductase, ydjA, from Escherichia coli K12 with and without FMN cofactor.</title>
        <authorList>
            <person name="Choi J.-W."/>
            <person name="Lee J."/>
            <person name="Nishi K."/>
            <person name="Kim Y.-S."/>
            <person name="Jung C.-H."/>
            <person name="Kim J.-S."/>
        </authorList>
    </citation>
    <scope>X-RAY CRYSTALLOGRAPHY (2.0 ANGSTROMS) IN COMPLEX WITH FMN</scope>
    <scope>COFACTOR</scope>
    <scope>SUBUNIT</scope>
</reference>
<sequence>MDALELLINRRSASRLAEPAPTGEQLQNILRAGMRAPDHKSMQPWHFFVIEGEGRERFSAVLEQGAIAAGSDDKAIDKARNAPFRAPLIITVVAKCEENHKVPRWEQEMSAGCAVMAMQMAAVAQGFGGIWRSGALTESPVVREAFGCREQDKIVGFLYLGTPQLKASTSINVPDPTPFVTYF</sequence>
<feature type="chain" id="PRO_0000169002" description="Putative NAD(P)H nitroreductase YdjA">
    <location>
        <begin position="1"/>
        <end position="183"/>
    </location>
</feature>
<feature type="binding site" description="in other chain" evidence="2">
    <location>
        <begin position="10"/>
        <end position="12"/>
    </location>
    <ligand>
        <name>FMN</name>
        <dbReference type="ChEBI" id="CHEBI:58210"/>
        <note>ligand shared between dimeric partners</note>
    </ligand>
</feature>
<feature type="binding site" evidence="2">
    <location>
        <position position="35"/>
    </location>
    <ligand>
        <name>FMN</name>
        <dbReference type="ChEBI" id="CHEBI:58210"/>
        <note>ligand shared between dimeric partners</note>
    </ligand>
</feature>
<feature type="binding site" evidence="2">
    <location>
        <position position="39"/>
    </location>
    <ligand>
        <name>FMN</name>
        <dbReference type="ChEBI" id="CHEBI:58210"/>
        <note>ligand shared between dimeric partners</note>
    </ligand>
</feature>
<feature type="binding site" evidence="1">
    <location>
        <begin position="121"/>
        <end position="126"/>
    </location>
    <ligand>
        <name>NAD(+)</name>
        <dbReference type="ChEBI" id="CHEBI:57540"/>
    </ligand>
</feature>
<feature type="binding site" description="in other chain" evidence="2">
    <location>
        <begin position="131"/>
        <end position="133"/>
    </location>
    <ligand>
        <name>FMN</name>
        <dbReference type="ChEBI" id="CHEBI:58210"/>
        <note>ligand shared between dimeric partners</note>
    </ligand>
</feature>
<feature type="helix" evidence="4">
    <location>
        <begin position="3"/>
        <end position="9"/>
    </location>
</feature>
<feature type="strand" evidence="4">
    <location>
        <begin position="16"/>
        <end position="18"/>
    </location>
</feature>
<feature type="helix" evidence="4">
    <location>
        <begin position="23"/>
        <end position="33"/>
    </location>
</feature>
<feature type="strand" evidence="4">
    <location>
        <begin position="46"/>
        <end position="51"/>
    </location>
</feature>
<feature type="helix" evidence="4">
    <location>
        <begin position="53"/>
        <end position="69"/>
    </location>
</feature>
<feature type="helix" evidence="4">
    <location>
        <begin position="73"/>
        <end position="81"/>
    </location>
</feature>
<feature type="helix" evidence="4">
    <location>
        <begin position="82"/>
        <end position="85"/>
    </location>
</feature>
<feature type="strand" evidence="4">
    <location>
        <begin position="86"/>
        <end position="94"/>
    </location>
</feature>
<feature type="strand" evidence="4">
    <location>
        <begin position="100"/>
        <end position="102"/>
    </location>
</feature>
<feature type="helix" evidence="4">
    <location>
        <begin position="104"/>
        <end position="123"/>
    </location>
</feature>
<feature type="turn" evidence="4">
    <location>
        <begin position="124"/>
        <end position="126"/>
    </location>
</feature>
<feature type="strand" evidence="4">
    <location>
        <begin position="128"/>
        <end position="132"/>
    </location>
</feature>
<feature type="helix" evidence="4">
    <location>
        <begin position="135"/>
        <end position="138"/>
    </location>
</feature>
<feature type="helix" evidence="4">
    <location>
        <begin position="140"/>
        <end position="145"/>
    </location>
</feature>
<feature type="strand" evidence="4">
    <location>
        <begin position="153"/>
        <end position="163"/>
    </location>
</feature>
<feature type="helix" evidence="4">
    <location>
        <begin position="177"/>
        <end position="179"/>
    </location>
</feature>
<feature type="strand" evidence="4">
    <location>
        <begin position="180"/>
        <end position="182"/>
    </location>
</feature>
<accession>P0ACY1</accession>
<accession>P24250</accession>
<protein>
    <recommendedName>
        <fullName>Putative NAD(P)H nitroreductase YdjA</fullName>
        <ecNumber>1.-.-.-</ecNumber>
    </recommendedName>
</protein>